<reference key="1">
    <citation type="journal article" date="1987" name="Nature">
        <title>The Drosophila developmental gene snail encodes a protein with nucleic acid binding fingers.</title>
        <authorList>
            <person name="Boulay J.L."/>
            <person name="Dennefeld C."/>
            <person name="Alberga A."/>
        </authorList>
    </citation>
    <scope>NUCLEOTIDE SEQUENCE [MRNA]</scope>
</reference>
<reference key="2">
    <citation type="submission" date="1999-12" db="EMBL/GenBank/DDBJ databases">
        <authorList>
            <person name="Alberga A.A."/>
            <person name="Boulay J.L."/>
            <person name="Dennefeld C."/>
            <person name="Mauhin V."/>
            <person name="Vicaire S."/>
        </authorList>
    </citation>
    <scope>NUCLEOTIDE SEQUENCE [GENOMIC DNA]</scope>
    <source>
        <strain>Oregon-R</strain>
    </source>
</reference>
<reference key="3">
    <citation type="journal article" date="1999" name="Genetics">
        <title>An exploration of the sequence of a 2.9-Mb region of the genome of Drosophila melanogaster: the Adh region.</title>
        <authorList>
            <person name="Ashburner M."/>
            <person name="Misra S."/>
            <person name="Roote J."/>
            <person name="Lewis S.E."/>
            <person name="Blazej R.G."/>
            <person name="Davis T."/>
            <person name="Doyle C."/>
            <person name="Galle R.F."/>
            <person name="George R.A."/>
            <person name="Harris N.L."/>
            <person name="Hartzell G."/>
            <person name="Harvey D.A."/>
            <person name="Hong L."/>
            <person name="Houston K.A."/>
            <person name="Hoskins R.A."/>
            <person name="Johnson G."/>
            <person name="Martin C."/>
            <person name="Moshrefi A.R."/>
            <person name="Palazzolo M."/>
            <person name="Reese M.G."/>
            <person name="Spradling A.C."/>
            <person name="Tsang G."/>
            <person name="Wan K.H."/>
            <person name="Whitelaw K."/>
            <person name="Celniker S.E."/>
            <person name="Rubin G.M."/>
        </authorList>
    </citation>
    <scope>NUCLEOTIDE SEQUENCE [LARGE SCALE GENOMIC DNA]</scope>
    <source>
        <strain>Berkeley</strain>
    </source>
</reference>
<reference key="4">
    <citation type="journal article" date="2000" name="Science">
        <title>The genome sequence of Drosophila melanogaster.</title>
        <authorList>
            <person name="Adams M.D."/>
            <person name="Celniker S.E."/>
            <person name="Holt R.A."/>
            <person name="Evans C.A."/>
            <person name="Gocayne J.D."/>
            <person name="Amanatides P.G."/>
            <person name="Scherer S.E."/>
            <person name="Li P.W."/>
            <person name="Hoskins R.A."/>
            <person name="Galle R.F."/>
            <person name="George R.A."/>
            <person name="Lewis S.E."/>
            <person name="Richards S."/>
            <person name="Ashburner M."/>
            <person name="Henderson S.N."/>
            <person name="Sutton G.G."/>
            <person name="Wortman J.R."/>
            <person name="Yandell M.D."/>
            <person name="Zhang Q."/>
            <person name="Chen L.X."/>
            <person name="Brandon R.C."/>
            <person name="Rogers Y.-H.C."/>
            <person name="Blazej R.G."/>
            <person name="Champe M."/>
            <person name="Pfeiffer B.D."/>
            <person name="Wan K.H."/>
            <person name="Doyle C."/>
            <person name="Baxter E.G."/>
            <person name="Helt G."/>
            <person name="Nelson C.R."/>
            <person name="Miklos G.L.G."/>
            <person name="Abril J.F."/>
            <person name="Agbayani A."/>
            <person name="An H.-J."/>
            <person name="Andrews-Pfannkoch C."/>
            <person name="Baldwin D."/>
            <person name="Ballew R.M."/>
            <person name="Basu A."/>
            <person name="Baxendale J."/>
            <person name="Bayraktaroglu L."/>
            <person name="Beasley E.M."/>
            <person name="Beeson K.Y."/>
            <person name="Benos P.V."/>
            <person name="Berman B.P."/>
            <person name="Bhandari D."/>
            <person name="Bolshakov S."/>
            <person name="Borkova D."/>
            <person name="Botchan M.R."/>
            <person name="Bouck J."/>
            <person name="Brokstein P."/>
            <person name="Brottier P."/>
            <person name="Burtis K.C."/>
            <person name="Busam D.A."/>
            <person name="Butler H."/>
            <person name="Cadieu E."/>
            <person name="Center A."/>
            <person name="Chandra I."/>
            <person name="Cherry J.M."/>
            <person name="Cawley S."/>
            <person name="Dahlke C."/>
            <person name="Davenport L.B."/>
            <person name="Davies P."/>
            <person name="de Pablos B."/>
            <person name="Delcher A."/>
            <person name="Deng Z."/>
            <person name="Mays A.D."/>
            <person name="Dew I."/>
            <person name="Dietz S.M."/>
            <person name="Dodson K."/>
            <person name="Doup L.E."/>
            <person name="Downes M."/>
            <person name="Dugan-Rocha S."/>
            <person name="Dunkov B.C."/>
            <person name="Dunn P."/>
            <person name="Durbin K.J."/>
            <person name="Evangelista C.C."/>
            <person name="Ferraz C."/>
            <person name="Ferriera S."/>
            <person name="Fleischmann W."/>
            <person name="Fosler C."/>
            <person name="Gabrielian A.E."/>
            <person name="Garg N.S."/>
            <person name="Gelbart W.M."/>
            <person name="Glasser K."/>
            <person name="Glodek A."/>
            <person name="Gong F."/>
            <person name="Gorrell J.H."/>
            <person name="Gu Z."/>
            <person name="Guan P."/>
            <person name="Harris M."/>
            <person name="Harris N.L."/>
            <person name="Harvey D.A."/>
            <person name="Heiman T.J."/>
            <person name="Hernandez J.R."/>
            <person name="Houck J."/>
            <person name="Hostin D."/>
            <person name="Houston K.A."/>
            <person name="Howland T.J."/>
            <person name="Wei M.-H."/>
            <person name="Ibegwam C."/>
            <person name="Jalali M."/>
            <person name="Kalush F."/>
            <person name="Karpen G.H."/>
            <person name="Ke Z."/>
            <person name="Kennison J.A."/>
            <person name="Ketchum K.A."/>
            <person name="Kimmel B.E."/>
            <person name="Kodira C.D."/>
            <person name="Kraft C.L."/>
            <person name="Kravitz S."/>
            <person name="Kulp D."/>
            <person name="Lai Z."/>
            <person name="Lasko P."/>
            <person name="Lei Y."/>
            <person name="Levitsky A.A."/>
            <person name="Li J.H."/>
            <person name="Li Z."/>
            <person name="Liang Y."/>
            <person name="Lin X."/>
            <person name="Liu X."/>
            <person name="Mattei B."/>
            <person name="McIntosh T.C."/>
            <person name="McLeod M.P."/>
            <person name="McPherson D."/>
            <person name="Merkulov G."/>
            <person name="Milshina N.V."/>
            <person name="Mobarry C."/>
            <person name="Morris J."/>
            <person name="Moshrefi A."/>
            <person name="Mount S.M."/>
            <person name="Moy M."/>
            <person name="Murphy B."/>
            <person name="Murphy L."/>
            <person name="Muzny D.M."/>
            <person name="Nelson D.L."/>
            <person name="Nelson D.R."/>
            <person name="Nelson K.A."/>
            <person name="Nixon K."/>
            <person name="Nusskern D.R."/>
            <person name="Pacleb J.M."/>
            <person name="Palazzolo M."/>
            <person name="Pittman G.S."/>
            <person name="Pan S."/>
            <person name="Pollard J."/>
            <person name="Puri V."/>
            <person name="Reese M.G."/>
            <person name="Reinert K."/>
            <person name="Remington K."/>
            <person name="Saunders R.D.C."/>
            <person name="Scheeler F."/>
            <person name="Shen H."/>
            <person name="Shue B.C."/>
            <person name="Siden-Kiamos I."/>
            <person name="Simpson M."/>
            <person name="Skupski M.P."/>
            <person name="Smith T.J."/>
            <person name="Spier E."/>
            <person name="Spradling A.C."/>
            <person name="Stapleton M."/>
            <person name="Strong R."/>
            <person name="Sun E."/>
            <person name="Svirskas R."/>
            <person name="Tector C."/>
            <person name="Turner R."/>
            <person name="Venter E."/>
            <person name="Wang A.H."/>
            <person name="Wang X."/>
            <person name="Wang Z.-Y."/>
            <person name="Wassarman D.A."/>
            <person name="Weinstock G.M."/>
            <person name="Weissenbach J."/>
            <person name="Williams S.M."/>
            <person name="Woodage T."/>
            <person name="Worley K.C."/>
            <person name="Wu D."/>
            <person name="Yang S."/>
            <person name="Yao Q.A."/>
            <person name="Ye J."/>
            <person name="Yeh R.-F."/>
            <person name="Zaveri J.S."/>
            <person name="Zhan M."/>
            <person name="Zhang G."/>
            <person name="Zhao Q."/>
            <person name="Zheng L."/>
            <person name="Zheng X.H."/>
            <person name="Zhong F.N."/>
            <person name="Zhong W."/>
            <person name="Zhou X."/>
            <person name="Zhu S.C."/>
            <person name="Zhu X."/>
            <person name="Smith H.O."/>
            <person name="Gibbs R.A."/>
            <person name="Myers E.W."/>
            <person name="Rubin G.M."/>
            <person name="Venter J.C."/>
        </authorList>
    </citation>
    <scope>NUCLEOTIDE SEQUENCE [LARGE SCALE GENOMIC DNA]</scope>
    <source>
        <strain>Berkeley</strain>
    </source>
</reference>
<reference key="5">
    <citation type="journal article" date="2002" name="Genome Biol.">
        <title>Annotation of the Drosophila melanogaster euchromatic genome: a systematic review.</title>
        <authorList>
            <person name="Misra S."/>
            <person name="Crosby M.A."/>
            <person name="Mungall C.J."/>
            <person name="Matthews B.B."/>
            <person name="Campbell K.S."/>
            <person name="Hradecky P."/>
            <person name="Huang Y."/>
            <person name="Kaminker J.S."/>
            <person name="Millburn G.H."/>
            <person name="Prochnik S.E."/>
            <person name="Smith C.D."/>
            <person name="Tupy J.L."/>
            <person name="Whitfield E.J."/>
            <person name="Bayraktaroglu L."/>
            <person name="Berman B.P."/>
            <person name="Bettencourt B.R."/>
            <person name="Celniker S.E."/>
            <person name="de Grey A.D.N.J."/>
            <person name="Drysdale R.A."/>
            <person name="Harris N.L."/>
            <person name="Richter J."/>
            <person name="Russo S."/>
            <person name="Schroeder A.J."/>
            <person name="Shu S.Q."/>
            <person name="Stapleton M."/>
            <person name="Yamada C."/>
            <person name="Ashburner M."/>
            <person name="Gelbart W.M."/>
            <person name="Rubin G.M."/>
            <person name="Lewis S.E."/>
        </authorList>
    </citation>
    <scope>GENOME REANNOTATION</scope>
    <source>
        <strain>Berkeley</strain>
    </source>
</reference>
<reference key="6">
    <citation type="submission" date="2003-08" db="EMBL/GenBank/DDBJ databases">
        <authorList>
            <person name="Stapleton M."/>
            <person name="Brokstein P."/>
            <person name="Hong L."/>
            <person name="Agbayani A."/>
            <person name="Carlson J.W."/>
            <person name="Champe M."/>
            <person name="Chavez C."/>
            <person name="Dorsett V."/>
            <person name="Dresnek D."/>
            <person name="Farfan D."/>
            <person name="Frise E."/>
            <person name="George R.A."/>
            <person name="Gonzalez M."/>
            <person name="Guarin H."/>
            <person name="Kronmiller B."/>
            <person name="Li P.W."/>
            <person name="Liao G."/>
            <person name="Miranda A."/>
            <person name="Mungall C.J."/>
            <person name="Nunoo J."/>
            <person name="Pacleb J.M."/>
            <person name="Paragas V."/>
            <person name="Park S."/>
            <person name="Patel S."/>
            <person name="Phouanenavong S."/>
            <person name="Wan K.H."/>
            <person name="Yu C."/>
            <person name="Lewis S.E."/>
            <person name="Rubin G.M."/>
            <person name="Celniker S.E."/>
        </authorList>
    </citation>
    <scope>NUCLEOTIDE SEQUENCE [LARGE SCALE MRNA]</scope>
    <source>
        <strain>Berkeley</strain>
        <tissue>Embryo</tissue>
    </source>
</reference>
<reference key="7">
    <citation type="journal article" date="1992" name="Proc. Natl. Acad. Sci. U.S.A.">
        <title>Evolutionary conservation pattern of zinc-finger domains of Drosophila segmentation genes.</title>
        <authorList>
            <person name="Sommer R.J."/>
            <person name="Retzlaff M."/>
            <person name="Goerlich K."/>
            <person name="Sander K."/>
            <person name="Tautz D."/>
        </authorList>
    </citation>
    <scope>NUCLEOTIDE SEQUENCE OF 263-344</scope>
</reference>
<protein>
    <recommendedName>
        <fullName>Protein snail</fullName>
    </recommendedName>
</protein>
<sequence>MAANYKSCPLKKRPIVFVEERLPQTEALALTKDSQFAQDQPQDLSLKRGRDEETQDYQQPEPKRDYVLNLSKTPERNSSSSSNSCLLSPPVEAQDYLPTEIHMRGLTAGTTGYTTATPTTINPFQSAFVMAAGCNPISALWSSYQPHLAAFPSPASSMASPQSVYSYQQMTPPSSPGSDLETGSEPEDLSVRNDIPLPALFHLFDEAKSSSSGASVSSSSGYSYTPAMSASSASVAANHAKNYRFKCDECQKMYSTSMGLSKHRQFHCPAAECNQEKKTHSCEECGKLYTTIGALKMHIRTHTLPCKCPICGKAFSRPWLLQGHIRTHTGEKPFQCPDCPRSFADRSNLRAHQQTHVDVKKYACQVCHKSFSRMSLLNKHSSSNCTITIA</sequence>
<feature type="chain" id="PRO_0000047028" description="Protein snail">
    <location>
        <begin position="1"/>
        <end position="390"/>
    </location>
</feature>
<feature type="zinc finger region" description="C2H2-type 1" evidence="2">
    <location>
        <begin position="245"/>
        <end position="267"/>
    </location>
</feature>
<feature type="zinc finger region" description="C2H2-type 2" evidence="2">
    <location>
        <begin position="280"/>
        <end position="302"/>
    </location>
</feature>
<feature type="zinc finger region" description="C2H2-type 3" evidence="2">
    <location>
        <begin position="306"/>
        <end position="328"/>
    </location>
</feature>
<feature type="zinc finger region" description="C2H2-type 4" evidence="2">
    <location>
        <begin position="334"/>
        <end position="356"/>
    </location>
</feature>
<feature type="zinc finger region" description="C2H2-type 5" evidence="2">
    <location>
        <begin position="362"/>
        <end position="385"/>
    </location>
</feature>
<feature type="region of interest" description="SNAG domain" evidence="1">
    <location>
        <begin position="1"/>
        <end position="20"/>
    </location>
</feature>
<feature type="region of interest" description="Disordered" evidence="3">
    <location>
        <begin position="29"/>
        <end position="65"/>
    </location>
</feature>
<feature type="region of interest" description="Disordered" evidence="3">
    <location>
        <begin position="162"/>
        <end position="191"/>
    </location>
</feature>
<feature type="compositionally biased region" description="Polar residues" evidence="3">
    <location>
        <begin position="32"/>
        <end position="43"/>
    </location>
</feature>
<feature type="compositionally biased region" description="Polar residues" evidence="3">
    <location>
        <begin position="162"/>
        <end position="172"/>
    </location>
</feature>
<feature type="sequence conflict" description="In Ref. 1 and 2." evidence="4" ref="1 2">
    <original>A</original>
    <variation>T</variation>
    <location>
        <position position="93"/>
    </location>
</feature>
<evidence type="ECO:0000250" key="1"/>
<evidence type="ECO:0000255" key="2">
    <source>
        <dbReference type="PROSITE-ProRule" id="PRU00042"/>
    </source>
</evidence>
<evidence type="ECO:0000256" key="3">
    <source>
        <dbReference type="SAM" id="MobiDB-lite"/>
    </source>
</evidence>
<evidence type="ECO:0000305" key="4"/>
<keyword id="KW-0217">Developmental protein</keyword>
<keyword id="KW-0238">DNA-binding</keyword>
<keyword id="KW-0479">Metal-binding</keyword>
<keyword id="KW-0539">Nucleus</keyword>
<keyword id="KW-1185">Reference proteome</keyword>
<keyword id="KW-0677">Repeat</keyword>
<keyword id="KW-0862">Zinc</keyword>
<keyword id="KW-0863">Zinc-finger</keyword>
<gene>
    <name type="primary">sna</name>
    <name type="ORF">CG3956</name>
</gene>
<proteinExistence type="evidence at protein level"/>
<organism>
    <name type="scientific">Drosophila melanogaster</name>
    <name type="common">Fruit fly</name>
    <dbReference type="NCBI Taxonomy" id="7227"/>
    <lineage>
        <taxon>Eukaryota</taxon>
        <taxon>Metazoa</taxon>
        <taxon>Ecdysozoa</taxon>
        <taxon>Arthropoda</taxon>
        <taxon>Hexapoda</taxon>
        <taxon>Insecta</taxon>
        <taxon>Pterygota</taxon>
        <taxon>Neoptera</taxon>
        <taxon>Endopterygota</taxon>
        <taxon>Diptera</taxon>
        <taxon>Brachycera</taxon>
        <taxon>Muscomorpha</taxon>
        <taxon>Ephydroidea</taxon>
        <taxon>Drosophilidae</taxon>
        <taxon>Drosophila</taxon>
        <taxon>Sophophora</taxon>
    </lineage>
</organism>
<comment type="function">
    <text>Essential for the correct specification of ventral-dorsal patterns.</text>
</comment>
<comment type="interaction">
    <interactant intactId="EBI-152305">
        <id>P08044</id>
    </interactant>
    <interactant intactId="EBI-159330">
        <id>O46036</id>
        <label>CtBP</label>
    </interactant>
    <organismsDiffer>false</organismsDiffer>
    <experiments>4</experiments>
</comment>
<comment type="interaction">
    <interactant intactId="EBI-152305">
        <id>P08044</id>
    </interactant>
    <interactant intactId="EBI-421390">
        <id>Q95RJ9</id>
        <label>ebi</label>
    </interactant>
    <organismsDiffer>false</organismsDiffer>
    <experiments>2</experiments>
</comment>
<comment type="subcellular location">
    <subcellularLocation>
        <location>Nucleus</location>
    </subcellularLocation>
</comment>
<comment type="similarity">
    <text evidence="4">Belongs to the snail C2H2-type zinc-finger protein family.</text>
</comment>
<dbReference type="EMBL" id="Y00288">
    <property type="protein sequence ID" value="CAA68397.1"/>
    <property type="molecule type" value="mRNA"/>
</dbReference>
<dbReference type="EMBL" id="AJ251486">
    <property type="protein sequence ID" value="CAB62556.1"/>
    <property type="molecule type" value="Genomic_DNA"/>
</dbReference>
<dbReference type="EMBL" id="AE014134">
    <property type="protein sequence ID" value="AAF53463.1"/>
    <property type="molecule type" value="Genomic_DNA"/>
</dbReference>
<dbReference type="EMBL" id="BT010255">
    <property type="protein sequence ID" value="AAQ23573.1"/>
    <property type="molecule type" value="mRNA"/>
</dbReference>
<dbReference type="PIR" id="S06222">
    <property type="entry name" value="S06222"/>
</dbReference>
<dbReference type="RefSeq" id="NP_476732.1">
    <property type="nucleotide sequence ID" value="NM_057384.4"/>
</dbReference>
<dbReference type="SMR" id="P08044"/>
<dbReference type="BioGRID" id="60924">
    <property type="interactions" value="18"/>
</dbReference>
<dbReference type="DIP" id="DIP-21498N"/>
<dbReference type="FunCoup" id="P08044">
    <property type="interactions" value="36"/>
</dbReference>
<dbReference type="IntAct" id="P08044">
    <property type="interactions" value="7"/>
</dbReference>
<dbReference type="MINT" id="P08044"/>
<dbReference type="STRING" id="7227.FBpp0080298"/>
<dbReference type="PaxDb" id="7227-FBpp0080298"/>
<dbReference type="EnsemblMetazoa" id="FBtr0080739">
    <property type="protein sequence ID" value="FBpp0080298"/>
    <property type="gene ID" value="FBgn0003448"/>
</dbReference>
<dbReference type="GeneID" id="34908"/>
<dbReference type="KEGG" id="dme:Dmel_CG3956"/>
<dbReference type="UCSC" id="CG3956-RA">
    <property type="organism name" value="d. melanogaster"/>
</dbReference>
<dbReference type="AGR" id="FB:FBgn0003448"/>
<dbReference type="CTD" id="34908"/>
<dbReference type="FlyBase" id="FBgn0003448">
    <property type="gene designation" value="sna"/>
</dbReference>
<dbReference type="VEuPathDB" id="VectorBase:FBgn0003448"/>
<dbReference type="eggNOG" id="KOG2462">
    <property type="taxonomic scope" value="Eukaryota"/>
</dbReference>
<dbReference type="GeneTree" id="ENSGT00940000166773"/>
<dbReference type="HOGENOM" id="CLU_030677_0_1_1"/>
<dbReference type="InParanoid" id="P08044"/>
<dbReference type="OMA" id="ECQKMYS"/>
<dbReference type="OrthoDB" id="5428132at2759"/>
<dbReference type="PhylomeDB" id="P08044"/>
<dbReference type="SignaLink" id="P08044"/>
<dbReference type="BioGRID-ORCS" id="34908">
    <property type="hits" value="0 hits in 3 CRISPR screens"/>
</dbReference>
<dbReference type="GenomeRNAi" id="34908"/>
<dbReference type="PRO" id="PR:P08044"/>
<dbReference type="Proteomes" id="UP000000803">
    <property type="component" value="Chromosome 2L"/>
</dbReference>
<dbReference type="Bgee" id="FBgn0003448">
    <property type="expression patterns" value="Expressed in embryonic imaginal precursor and 48 other cell types or tissues"/>
</dbReference>
<dbReference type="GO" id="GO:0005634">
    <property type="term" value="C:nucleus"/>
    <property type="evidence" value="ECO:0000314"/>
    <property type="project" value="FlyBase"/>
</dbReference>
<dbReference type="GO" id="GO:0003677">
    <property type="term" value="F:DNA binding"/>
    <property type="evidence" value="ECO:0000314"/>
    <property type="project" value="FlyBase"/>
</dbReference>
<dbReference type="GO" id="GO:0000981">
    <property type="term" value="F:DNA-binding transcription factor activity, RNA polymerase II-specific"/>
    <property type="evidence" value="ECO:0000318"/>
    <property type="project" value="GO_Central"/>
</dbReference>
<dbReference type="GO" id="GO:0140297">
    <property type="term" value="F:DNA-binding transcription factor binding"/>
    <property type="evidence" value="ECO:0000353"/>
    <property type="project" value="FlyBase"/>
</dbReference>
<dbReference type="GO" id="GO:0000978">
    <property type="term" value="F:RNA polymerase II cis-regulatory region sequence-specific DNA binding"/>
    <property type="evidence" value="ECO:0000318"/>
    <property type="project" value="GO_Central"/>
</dbReference>
<dbReference type="GO" id="GO:0000977">
    <property type="term" value="F:RNA polymerase II transcription regulatory region sequence-specific DNA binding"/>
    <property type="evidence" value="ECO:0000314"/>
    <property type="project" value="FlyBase"/>
</dbReference>
<dbReference type="GO" id="GO:0043565">
    <property type="term" value="F:sequence-specific DNA binding"/>
    <property type="evidence" value="ECO:0000314"/>
    <property type="project" value="FlyBase"/>
</dbReference>
<dbReference type="GO" id="GO:0000976">
    <property type="term" value="F:transcription cis-regulatory region binding"/>
    <property type="evidence" value="ECO:0000314"/>
    <property type="project" value="FlyBase"/>
</dbReference>
<dbReference type="GO" id="GO:0008270">
    <property type="term" value="F:zinc ion binding"/>
    <property type="evidence" value="ECO:0007669"/>
    <property type="project" value="UniProtKB-KW"/>
</dbReference>
<dbReference type="GO" id="GO:0055059">
    <property type="term" value="P:asymmetric neuroblast division"/>
    <property type="evidence" value="ECO:0000316"/>
    <property type="project" value="FlyBase"/>
</dbReference>
<dbReference type="GO" id="GO:0007417">
    <property type="term" value="P:central nervous system development"/>
    <property type="evidence" value="ECO:0000315"/>
    <property type="project" value="FlyBase"/>
</dbReference>
<dbReference type="GO" id="GO:0048749">
    <property type="term" value="P:compound eye development"/>
    <property type="evidence" value="ECO:0000315"/>
    <property type="project" value="FlyBase"/>
</dbReference>
<dbReference type="GO" id="GO:0007499">
    <property type="term" value="P:ectoderm and mesoderm interaction"/>
    <property type="evidence" value="ECO:0000303"/>
    <property type="project" value="FlyBase"/>
</dbReference>
<dbReference type="GO" id="GO:0010004">
    <property type="term" value="P:gastrulation involving germ band extension"/>
    <property type="evidence" value="ECO:0000315"/>
    <property type="project" value="FlyBase"/>
</dbReference>
<dbReference type="GO" id="GO:0007443">
    <property type="term" value="P:Malpighian tubule morphogenesis"/>
    <property type="evidence" value="ECO:0000315"/>
    <property type="project" value="FlyBase"/>
</dbReference>
<dbReference type="GO" id="GO:0007498">
    <property type="term" value="P:mesoderm development"/>
    <property type="evidence" value="ECO:0000304"/>
    <property type="project" value="FlyBase"/>
</dbReference>
<dbReference type="GO" id="GO:0045892">
    <property type="term" value="P:negative regulation of DNA-templated transcription"/>
    <property type="evidence" value="ECO:0000315"/>
    <property type="project" value="FlyBase"/>
</dbReference>
<dbReference type="GO" id="GO:0000122">
    <property type="term" value="P:negative regulation of transcription by RNA polymerase II"/>
    <property type="evidence" value="ECO:0000314"/>
    <property type="project" value="FlyBase"/>
</dbReference>
<dbReference type="GO" id="GO:0045893">
    <property type="term" value="P:positive regulation of DNA-templated transcription"/>
    <property type="evidence" value="ECO:0000314"/>
    <property type="project" value="FlyBase"/>
</dbReference>
<dbReference type="GO" id="GO:0045944">
    <property type="term" value="P:positive regulation of transcription by RNA polymerase II"/>
    <property type="evidence" value="ECO:0000315"/>
    <property type="project" value="FlyBase"/>
</dbReference>
<dbReference type="GO" id="GO:0006355">
    <property type="term" value="P:regulation of DNA-templated transcription"/>
    <property type="evidence" value="ECO:0000318"/>
    <property type="project" value="GO_Central"/>
</dbReference>
<dbReference type="GO" id="GO:2000177">
    <property type="term" value="P:regulation of neural precursor cell proliferation"/>
    <property type="evidence" value="ECO:0000315"/>
    <property type="project" value="FlyBase"/>
</dbReference>
<dbReference type="GO" id="GO:0007370">
    <property type="term" value="P:ventral furrow formation"/>
    <property type="evidence" value="ECO:0000316"/>
    <property type="project" value="FlyBase"/>
</dbReference>
<dbReference type="FunFam" id="3.30.160.60:FF:000043">
    <property type="entry name" value="Scratch family zinc finger 2"/>
    <property type="match status" value="1"/>
</dbReference>
<dbReference type="FunFam" id="3.30.160.60:FF:000358">
    <property type="entry name" value="zinc finger protein 24"/>
    <property type="match status" value="1"/>
</dbReference>
<dbReference type="FunFam" id="3.30.160.60:FF:000207">
    <property type="entry name" value="zinc finger protein SNAI2"/>
    <property type="match status" value="1"/>
</dbReference>
<dbReference type="FunFam" id="3.30.160.60:FF:000860">
    <property type="entry name" value="zinc finger protein SNAI2"/>
    <property type="match status" value="1"/>
</dbReference>
<dbReference type="Gene3D" id="3.30.160.60">
    <property type="entry name" value="Classic Zinc Finger"/>
    <property type="match status" value="4"/>
</dbReference>
<dbReference type="InterPro" id="IPR050527">
    <property type="entry name" value="Snail/Krueppel_Znf"/>
</dbReference>
<dbReference type="InterPro" id="IPR036236">
    <property type="entry name" value="Znf_C2H2_sf"/>
</dbReference>
<dbReference type="InterPro" id="IPR013087">
    <property type="entry name" value="Znf_C2H2_type"/>
</dbReference>
<dbReference type="PANTHER" id="PTHR24388:SF38">
    <property type="entry name" value="PROTEIN SNAIL"/>
    <property type="match status" value="1"/>
</dbReference>
<dbReference type="PANTHER" id="PTHR24388">
    <property type="entry name" value="ZINC FINGER PROTEIN"/>
    <property type="match status" value="1"/>
</dbReference>
<dbReference type="Pfam" id="PF00096">
    <property type="entry name" value="zf-C2H2"/>
    <property type="match status" value="5"/>
</dbReference>
<dbReference type="SMART" id="SM00355">
    <property type="entry name" value="ZnF_C2H2"/>
    <property type="match status" value="5"/>
</dbReference>
<dbReference type="SUPFAM" id="SSF57667">
    <property type="entry name" value="beta-beta-alpha zinc fingers"/>
    <property type="match status" value="3"/>
</dbReference>
<dbReference type="PROSITE" id="PS00028">
    <property type="entry name" value="ZINC_FINGER_C2H2_1"/>
    <property type="match status" value="4"/>
</dbReference>
<dbReference type="PROSITE" id="PS50157">
    <property type="entry name" value="ZINC_FINGER_C2H2_2"/>
    <property type="match status" value="5"/>
</dbReference>
<accession>P08044</accession>
<accession>Q9V3D3</accession>
<name>SNAI_DROME</name>